<keyword id="KW-0028">Amino-acid biosynthesis</keyword>
<keyword id="KW-0100">Branched-chain amino acid biosynthesis</keyword>
<keyword id="KW-0460">Magnesium</keyword>
<keyword id="KW-0479">Metal-binding</keyword>
<keyword id="KW-0521">NADP</keyword>
<keyword id="KW-0560">Oxidoreductase</keyword>
<protein>
    <recommendedName>
        <fullName evidence="1">Ketol-acid reductoisomerase (NADP(+))</fullName>
        <shortName evidence="1">KARI</shortName>
        <ecNumber evidence="1">1.1.1.86</ecNumber>
    </recommendedName>
    <alternativeName>
        <fullName evidence="1">Acetohydroxy-acid isomeroreductase</fullName>
        <shortName evidence="1">AHIR</shortName>
    </alternativeName>
    <alternativeName>
        <fullName evidence="1">Alpha-keto-beta-hydroxylacyl reductoisomerase</fullName>
    </alternativeName>
    <alternativeName>
        <fullName evidence="1">Ketol-acid reductoisomerase type 1</fullName>
    </alternativeName>
    <alternativeName>
        <fullName evidence="1">Ketol-acid reductoisomerase type I</fullName>
    </alternativeName>
</protein>
<comment type="function">
    <text evidence="1">Involved in the biosynthesis of branched-chain amino acids (BCAA). Catalyzes an alkyl-migration followed by a ketol-acid reduction of (S)-2-acetolactate (S2AL) to yield (R)-2,3-dihydroxy-isovalerate. In the isomerase reaction, S2AL is rearranged via a Mg-dependent methyl migration to produce 3-hydroxy-3-methyl-2-ketobutyrate (HMKB). In the reductase reaction, this 2-ketoacid undergoes a metal-dependent reduction by NADPH to yield (R)-2,3-dihydroxy-isovalerate.</text>
</comment>
<comment type="catalytic activity">
    <reaction evidence="1">
        <text>(2R)-2,3-dihydroxy-3-methylbutanoate + NADP(+) = (2S)-2-acetolactate + NADPH + H(+)</text>
        <dbReference type="Rhea" id="RHEA:22068"/>
        <dbReference type="ChEBI" id="CHEBI:15378"/>
        <dbReference type="ChEBI" id="CHEBI:49072"/>
        <dbReference type="ChEBI" id="CHEBI:57783"/>
        <dbReference type="ChEBI" id="CHEBI:58349"/>
        <dbReference type="ChEBI" id="CHEBI:58476"/>
        <dbReference type="EC" id="1.1.1.86"/>
    </reaction>
</comment>
<comment type="catalytic activity">
    <reaction evidence="1">
        <text>(2R,3R)-2,3-dihydroxy-3-methylpentanoate + NADP(+) = (S)-2-ethyl-2-hydroxy-3-oxobutanoate + NADPH + H(+)</text>
        <dbReference type="Rhea" id="RHEA:13493"/>
        <dbReference type="ChEBI" id="CHEBI:15378"/>
        <dbReference type="ChEBI" id="CHEBI:49256"/>
        <dbReference type="ChEBI" id="CHEBI:49258"/>
        <dbReference type="ChEBI" id="CHEBI:57783"/>
        <dbReference type="ChEBI" id="CHEBI:58349"/>
        <dbReference type="EC" id="1.1.1.86"/>
    </reaction>
</comment>
<comment type="cofactor">
    <cofactor evidence="1">
        <name>Mg(2+)</name>
        <dbReference type="ChEBI" id="CHEBI:18420"/>
    </cofactor>
    <text evidence="1">Binds 2 magnesium ions per subunit.</text>
</comment>
<comment type="pathway">
    <text evidence="1">Amino-acid biosynthesis; L-isoleucine biosynthesis; L-isoleucine from 2-oxobutanoate: step 2/4.</text>
</comment>
<comment type="pathway">
    <text evidence="1">Amino-acid biosynthesis; L-valine biosynthesis; L-valine from pyruvate: step 2/4.</text>
</comment>
<comment type="similarity">
    <text evidence="1">Belongs to the ketol-acid reductoisomerase family.</text>
</comment>
<proteinExistence type="inferred from homology"/>
<gene>
    <name evidence="1" type="primary">ilvC</name>
    <name type="ordered locus">DICTH_1062</name>
</gene>
<evidence type="ECO:0000255" key="1">
    <source>
        <dbReference type="HAMAP-Rule" id="MF_00435"/>
    </source>
</evidence>
<evidence type="ECO:0000255" key="2">
    <source>
        <dbReference type="PROSITE-ProRule" id="PRU01197"/>
    </source>
</evidence>
<evidence type="ECO:0000255" key="3">
    <source>
        <dbReference type="PROSITE-ProRule" id="PRU01198"/>
    </source>
</evidence>
<organism>
    <name type="scientific">Dictyoglomus thermophilum (strain ATCC 35947 / DSM 3960 / H-6-12)</name>
    <dbReference type="NCBI Taxonomy" id="309799"/>
    <lineage>
        <taxon>Bacteria</taxon>
        <taxon>Pseudomonadati</taxon>
        <taxon>Dictyoglomota</taxon>
        <taxon>Dictyoglomia</taxon>
        <taxon>Dictyoglomales</taxon>
        <taxon>Dictyoglomaceae</taxon>
        <taxon>Dictyoglomus</taxon>
    </lineage>
</organism>
<sequence>MAKIYHDLEVSLEVLSDKVITIIGYGSQGRAHALNLKDSGMKVIVAVRPNGESWKRALEEGMTVEKIEDAVQKSDIIMFLIPDTEQPAIYKEKVLPYLRPNQALGFAHGFNIHFSQIVPPPFVDVFMVAPKGPGPLVRDLYVEGKGVPALFAVYQDYTQKCRDIALAYAKGIGATRAGVLETTFKEETETDLFGEQVVLCGGVTALIKAGFETLVEAGYQPEVAYYECLHEMKLIVDLINQGGISFMRKAISDTAKYGDVTRGPRIVNEETKKEMKKILNEIQNGQFAKEWILENQVGRPVFNALLKKDEDHLIEKVGKVIREMMPWLKPKK</sequence>
<feature type="chain" id="PRO_1000190950" description="Ketol-acid reductoisomerase (NADP(+))">
    <location>
        <begin position="1"/>
        <end position="332"/>
    </location>
</feature>
<feature type="domain" description="KARI N-terminal Rossmann" evidence="2">
    <location>
        <begin position="2"/>
        <end position="182"/>
    </location>
</feature>
<feature type="domain" description="KARI C-terminal knotted" evidence="3">
    <location>
        <begin position="183"/>
        <end position="328"/>
    </location>
</feature>
<feature type="active site" evidence="1">
    <location>
        <position position="108"/>
    </location>
</feature>
<feature type="binding site" evidence="1">
    <location>
        <begin position="25"/>
        <end position="28"/>
    </location>
    <ligand>
        <name>NADP(+)</name>
        <dbReference type="ChEBI" id="CHEBI:58349"/>
    </ligand>
</feature>
<feature type="binding site" evidence="1">
    <location>
        <position position="48"/>
    </location>
    <ligand>
        <name>NADP(+)</name>
        <dbReference type="ChEBI" id="CHEBI:58349"/>
    </ligand>
</feature>
<feature type="binding site" evidence="1">
    <location>
        <position position="53"/>
    </location>
    <ligand>
        <name>NADP(+)</name>
        <dbReference type="ChEBI" id="CHEBI:58349"/>
    </ligand>
</feature>
<feature type="binding site" evidence="1">
    <location>
        <begin position="83"/>
        <end position="86"/>
    </location>
    <ligand>
        <name>NADP(+)</name>
        <dbReference type="ChEBI" id="CHEBI:58349"/>
    </ligand>
</feature>
<feature type="binding site" evidence="1">
    <location>
        <position position="134"/>
    </location>
    <ligand>
        <name>NADP(+)</name>
        <dbReference type="ChEBI" id="CHEBI:58349"/>
    </ligand>
</feature>
<feature type="binding site" evidence="1">
    <location>
        <position position="191"/>
    </location>
    <ligand>
        <name>Mg(2+)</name>
        <dbReference type="ChEBI" id="CHEBI:18420"/>
        <label>1</label>
    </ligand>
</feature>
<feature type="binding site" evidence="1">
    <location>
        <position position="191"/>
    </location>
    <ligand>
        <name>Mg(2+)</name>
        <dbReference type="ChEBI" id="CHEBI:18420"/>
        <label>2</label>
    </ligand>
</feature>
<feature type="binding site" evidence="1">
    <location>
        <position position="195"/>
    </location>
    <ligand>
        <name>Mg(2+)</name>
        <dbReference type="ChEBI" id="CHEBI:18420"/>
        <label>1</label>
    </ligand>
</feature>
<feature type="binding site" evidence="1">
    <location>
        <position position="227"/>
    </location>
    <ligand>
        <name>Mg(2+)</name>
        <dbReference type="ChEBI" id="CHEBI:18420"/>
        <label>2</label>
    </ligand>
</feature>
<feature type="binding site" evidence="1">
    <location>
        <position position="231"/>
    </location>
    <ligand>
        <name>Mg(2+)</name>
        <dbReference type="ChEBI" id="CHEBI:18420"/>
        <label>2</label>
    </ligand>
</feature>
<feature type="binding site" evidence="1">
    <location>
        <position position="252"/>
    </location>
    <ligand>
        <name>substrate</name>
    </ligand>
</feature>
<reference key="1">
    <citation type="journal article" date="2014" name="Genome Announc.">
        <title>Complete Genome Sequence of the Extreme Thermophile Dictyoglomus thermophilum H-6-12.</title>
        <authorList>
            <person name="Coil D.A."/>
            <person name="Badger J.H."/>
            <person name="Forberger H.C."/>
            <person name="Riggs F."/>
            <person name="Madupu R."/>
            <person name="Fedorova N."/>
            <person name="Ward N."/>
            <person name="Robb F.T."/>
            <person name="Eisen J.A."/>
        </authorList>
    </citation>
    <scope>NUCLEOTIDE SEQUENCE [LARGE SCALE GENOMIC DNA]</scope>
    <source>
        <strain>ATCC 35947 / DSM 3960 / H-6-12</strain>
    </source>
</reference>
<name>ILVC_DICT6</name>
<accession>B5YEF3</accession>
<dbReference type="EC" id="1.1.1.86" evidence="1"/>
<dbReference type="EMBL" id="CP001146">
    <property type="protein sequence ID" value="ACI20049.1"/>
    <property type="molecule type" value="Genomic_DNA"/>
</dbReference>
<dbReference type="RefSeq" id="WP_012548681.1">
    <property type="nucleotide sequence ID" value="NC_011297.1"/>
</dbReference>
<dbReference type="SMR" id="B5YEF3"/>
<dbReference type="STRING" id="309799.DICTH_1062"/>
<dbReference type="PaxDb" id="309799-DICTH_1062"/>
<dbReference type="KEGG" id="dth:DICTH_1062"/>
<dbReference type="eggNOG" id="COG0059">
    <property type="taxonomic scope" value="Bacteria"/>
</dbReference>
<dbReference type="HOGENOM" id="CLU_033821_0_1_0"/>
<dbReference type="OrthoDB" id="9804088at2"/>
<dbReference type="UniPathway" id="UPA00047">
    <property type="reaction ID" value="UER00056"/>
</dbReference>
<dbReference type="UniPathway" id="UPA00049">
    <property type="reaction ID" value="UER00060"/>
</dbReference>
<dbReference type="Proteomes" id="UP000001733">
    <property type="component" value="Chromosome"/>
</dbReference>
<dbReference type="GO" id="GO:0005829">
    <property type="term" value="C:cytosol"/>
    <property type="evidence" value="ECO:0007669"/>
    <property type="project" value="TreeGrafter"/>
</dbReference>
<dbReference type="GO" id="GO:0004455">
    <property type="term" value="F:ketol-acid reductoisomerase activity"/>
    <property type="evidence" value="ECO:0007669"/>
    <property type="project" value="UniProtKB-UniRule"/>
</dbReference>
<dbReference type="GO" id="GO:0000287">
    <property type="term" value="F:magnesium ion binding"/>
    <property type="evidence" value="ECO:0007669"/>
    <property type="project" value="UniProtKB-UniRule"/>
</dbReference>
<dbReference type="GO" id="GO:0050661">
    <property type="term" value="F:NADP binding"/>
    <property type="evidence" value="ECO:0007669"/>
    <property type="project" value="InterPro"/>
</dbReference>
<dbReference type="GO" id="GO:0009097">
    <property type="term" value="P:isoleucine biosynthetic process"/>
    <property type="evidence" value="ECO:0007669"/>
    <property type="project" value="UniProtKB-UniRule"/>
</dbReference>
<dbReference type="GO" id="GO:0009099">
    <property type="term" value="P:L-valine biosynthetic process"/>
    <property type="evidence" value="ECO:0007669"/>
    <property type="project" value="UniProtKB-UniRule"/>
</dbReference>
<dbReference type="FunFam" id="3.40.50.720:FF:000023">
    <property type="entry name" value="Ketol-acid reductoisomerase (NADP(+))"/>
    <property type="match status" value="1"/>
</dbReference>
<dbReference type="Gene3D" id="6.10.240.10">
    <property type="match status" value="1"/>
</dbReference>
<dbReference type="Gene3D" id="3.40.50.720">
    <property type="entry name" value="NAD(P)-binding Rossmann-like Domain"/>
    <property type="match status" value="1"/>
</dbReference>
<dbReference type="HAMAP" id="MF_00435">
    <property type="entry name" value="IlvC"/>
    <property type="match status" value="1"/>
</dbReference>
<dbReference type="InterPro" id="IPR008927">
    <property type="entry name" value="6-PGluconate_DH-like_C_sf"/>
</dbReference>
<dbReference type="InterPro" id="IPR013023">
    <property type="entry name" value="KARI"/>
</dbReference>
<dbReference type="InterPro" id="IPR000506">
    <property type="entry name" value="KARI_C"/>
</dbReference>
<dbReference type="InterPro" id="IPR013116">
    <property type="entry name" value="KARI_N"/>
</dbReference>
<dbReference type="InterPro" id="IPR014359">
    <property type="entry name" value="KARI_prok"/>
</dbReference>
<dbReference type="InterPro" id="IPR036291">
    <property type="entry name" value="NAD(P)-bd_dom_sf"/>
</dbReference>
<dbReference type="NCBIfam" id="TIGR00465">
    <property type="entry name" value="ilvC"/>
    <property type="match status" value="1"/>
</dbReference>
<dbReference type="NCBIfam" id="NF004017">
    <property type="entry name" value="PRK05479.1"/>
    <property type="match status" value="1"/>
</dbReference>
<dbReference type="NCBIfam" id="NF009940">
    <property type="entry name" value="PRK13403.1"/>
    <property type="match status" value="1"/>
</dbReference>
<dbReference type="PANTHER" id="PTHR21371">
    <property type="entry name" value="KETOL-ACID REDUCTOISOMERASE, MITOCHONDRIAL"/>
    <property type="match status" value="1"/>
</dbReference>
<dbReference type="PANTHER" id="PTHR21371:SF1">
    <property type="entry name" value="KETOL-ACID REDUCTOISOMERASE, MITOCHONDRIAL"/>
    <property type="match status" value="1"/>
</dbReference>
<dbReference type="Pfam" id="PF01450">
    <property type="entry name" value="KARI_C"/>
    <property type="match status" value="1"/>
</dbReference>
<dbReference type="Pfam" id="PF07991">
    <property type="entry name" value="KARI_N"/>
    <property type="match status" value="1"/>
</dbReference>
<dbReference type="PIRSF" id="PIRSF000116">
    <property type="entry name" value="IlvC_gammaproteo"/>
    <property type="match status" value="1"/>
</dbReference>
<dbReference type="SUPFAM" id="SSF48179">
    <property type="entry name" value="6-phosphogluconate dehydrogenase C-terminal domain-like"/>
    <property type="match status" value="1"/>
</dbReference>
<dbReference type="SUPFAM" id="SSF51735">
    <property type="entry name" value="NAD(P)-binding Rossmann-fold domains"/>
    <property type="match status" value="1"/>
</dbReference>
<dbReference type="PROSITE" id="PS51851">
    <property type="entry name" value="KARI_C"/>
    <property type="match status" value="1"/>
</dbReference>
<dbReference type="PROSITE" id="PS51850">
    <property type="entry name" value="KARI_N"/>
    <property type="match status" value="1"/>
</dbReference>